<accession>A7N080</accession>
<reference key="1">
    <citation type="submission" date="2007-08" db="EMBL/GenBank/DDBJ databases">
        <authorList>
            <consortium name="The Vibrio harveyi Genome Sequencing Project"/>
            <person name="Bassler B."/>
            <person name="Clifton S.W."/>
            <person name="Fulton L."/>
            <person name="Delehaunty K."/>
            <person name="Fronick C."/>
            <person name="Harrison M."/>
            <person name="Markivic C."/>
            <person name="Fulton R."/>
            <person name="Tin-Wollam A.-M."/>
            <person name="Shah N."/>
            <person name="Pepin K."/>
            <person name="Nash W."/>
            <person name="Thiruvilangam P."/>
            <person name="Bhonagiri V."/>
            <person name="Waters C."/>
            <person name="Tu K.C."/>
            <person name="Irgon J."/>
            <person name="Wilson R.K."/>
        </authorList>
    </citation>
    <scope>NUCLEOTIDE SEQUENCE [LARGE SCALE GENOMIC DNA]</scope>
    <source>
        <strain>ATCC BAA-1116 / BB120</strain>
    </source>
</reference>
<dbReference type="EMBL" id="CP000789">
    <property type="protein sequence ID" value="ABU69223.1"/>
    <property type="molecule type" value="Genomic_DNA"/>
</dbReference>
<dbReference type="RefSeq" id="WP_000462885.1">
    <property type="nucleotide sequence ID" value="NC_022269.1"/>
</dbReference>
<dbReference type="SMR" id="A7N080"/>
<dbReference type="GeneID" id="97171130"/>
<dbReference type="KEGG" id="vha:VIBHAR_00175"/>
<dbReference type="PATRIC" id="fig|338187.25.peg.2358"/>
<dbReference type="Proteomes" id="UP000008152">
    <property type="component" value="Chromosome I"/>
</dbReference>
<dbReference type="GO" id="GO:0003700">
    <property type="term" value="F:DNA-binding transcription factor activity"/>
    <property type="evidence" value="ECO:0007669"/>
    <property type="project" value="UniProtKB-UniRule"/>
</dbReference>
<dbReference type="GO" id="GO:0043565">
    <property type="term" value="F:sequence-specific DNA binding"/>
    <property type="evidence" value="ECO:0007669"/>
    <property type="project" value="InterPro"/>
</dbReference>
<dbReference type="FunFam" id="1.10.10.60:FF:000006">
    <property type="entry name" value="DNA-binding protein Fis"/>
    <property type="match status" value="1"/>
</dbReference>
<dbReference type="Gene3D" id="1.10.10.60">
    <property type="entry name" value="Homeodomain-like"/>
    <property type="match status" value="1"/>
</dbReference>
<dbReference type="HAMAP" id="MF_00166">
    <property type="entry name" value="DNA_binding_Fis"/>
    <property type="match status" value="1"/>
</dbReference>
<dbReference type="InterPro" id="IPR005412">
    <property type="entry name" value="Fis_DNA-bd"/>
</dbReference>
<dbReference type="InterPro" id="IPR009057">
    <property type="entry name" value="Homeodomain-like_sf"/>
</dbReference>
<dbReference type="InterPro" id="IPR002197">
    <property type="entry name" value="HTH_Fis"/>
</dbReference>
<dbReference type="InterPro" id="IPR050207">
    <property type="entry name" value="Trans_regulatory_Fis"/>
</dbReference>
<dbReference type="NCBIfam" id="NF001659">
    <property type="entry name" value="PRK00430.1"/>
    <property type="match status" value="1"/>
</dbReference>
<dbReference type="PANTHER" id="PTHR47918">
    <property type="entry name" value="DNA-BINDING PROTEIN FIS"/>
    <property type="match status" value="1"/>
</dbReference>
<dbReference type="PANTHER" id="PTHR47918:SF1">
    <property type="entry name" value="DNA-BINDING PROTEIN FIS"/>
    <property type="match status" value="1"/>
</dbReference>
<dbReference type="Pfam" id="PF02954">
    <property type="entry name" value="HTH_8"/>
    <property type="match status" value="1"/>
</dbReference>
<dbReference type="PIRSF" id="PIRSF002097">
    <property type="entry name" value="DNA-binding_Fis"/>
    <property type="match status" value="1"/>
</dbReference>
<dbReference type="PRINTS" id="PR01591">
    <property type="entry name" value="DNABINDNGFIS"/>
</dbReference>
<dbReference type="PRINTS" id="PR01590">
    <property type="entry name" value="HTHFIS"/>
</dbReference>
<dbReference type="SUPFAM" id="SSF46689">
    <property type="entry name" value="Homeodomain-like"/>
    <property type="match status" value="1"/>
</dbReference>
<evidence type="ECO:0000255" key="1">
    <source>
        <dbReference type="HAMAP-Rule" id="MF_00166"/>
    </source>
</evidence>
<proteinExistence type="inferred from homology"/>
<keyword id="KW-0010">Activator</keyword>
<keyword id="KW-0238">DNA-binding</keyword>
<keyword id="KW-0804">Transcription</keyword>
<keyword id="KW-0805">Transcription regulation</keyword>
<comment type="function">
    <text evidence="1">Activates ribosomal RNA transcription. Plays a direct role in upstream activation of rRNA promoters.</text>
</comment>
<comment type="subunit">
    <text evidence="1">Homodimer.</text>
</comment>
<comment type="similarity">
    <text evidence="1">Belongs to the transcriptional regulatory Fis family.</text>
</comment>
<feature type="chain" id="PRO_1000023350" description="DNA-binding protein Fis">
    <location>
        <begin position="1"/>
        <end position="98"/>
    </location>
</feature>
<feature type="DNA-binding region" description="H-T-H motif" evidence="1">
    <location>
        <begin position="74"/>
        <end position="93"/>
    </location>
</feature>
<name>FIS_VIBC1</name>
<gene>
    <name evidence="1" type="primary">fis</name>
    <name type="ordered locus">VIBHAR_00175</name>
</gene>
<sequence>MFEQNLTSEALTVTTVTSQDQITQKPLRDSVKASLKNYLAQLNGQEVTELYELVLAEVEQPLLDTIMQYTRGNQTRAATMMGINRGTLRKKLKKYGMN</sequence>
<protein>
    <recommendedName>
        <fullName evidence="1">DNA-binding protein Fis</fullName>
    </recommendedName>
</protein>
<organism>
    <name type="scientific">Vibrio campbellii (strain ATCC BAA-1116)</name>
    <dbReference type="NCBI Taxonomy" id="2902295"/>
    <lineage>
        <taxon>Bacteria</taxon>
        <taxon>Pseudomonadati</taxon>
        <taxon>Pseudomonadota</taxon>
        <taxon>Gammaproteobacteria</taxon>
        <taxon>Vibrionales</taxon>
        <taxon>Vibrionaceae</taxon>
        <taxon>Vibrio</taxon>
    </lineage>
</organism>